<name>LEPA_VIBC1</name>
<feature type="chain" id="PRO_1000032068" description="Elongation factor 4">
    <location>
        <begin position="1"/>
        <end position="597"/>
    </location>
</feature>
<feature type="domain" description="tr-type G">
    <location>
        <begin position="2"/>
        <end position="184"/>
    </location>
</feature>
<feature type="binding site" evidence="1">
    <location>
        <begin position="14"/>
        <end position="19"/>
    </location>
    <ligand>
        <name>GTP</name>
        <dbReference type="ChEBI" id="CHEBI:37565"/>
    </ligand>
</feature>
<feature type="binding site" evidence="1">
    <location>
        <begin position="131"/>
        <end position="134"/>
    </location>
    <ligand>
        <name>GTP</name>
        <dbReference type="ChEBI" id="CHEBI:37565"/>
    </ligand>
</feature>
<gene>
    <name evidence="1" type="primary">lepA</name>
    <name type="ordered locus">VIBHAR_03538</name>
</gene>
<keyword id="KW-0997">Cell inner membrane</keyword>
<keyword id="KW-1003">Cell membrane</keyword>
<keyword id="KW-0342">GTP-binding</keyword>
<keyword id="KW-0378">Hydrolase</keyword>
<keyword id="KW-0472">Membrane</keyword>
<keyword id="KW-0547">Nucleotide-binding</keyword>
<keyword id="KW-0648">Protein biosynthesis</keyword>
<organism>
    <name type="scientific">Vibrio campbellii (strain ATCC BAA-1116)</name>
    <dbReference type="NCBI Taxonomy" id="2902295"/>
    <lineage>
        <taxon>Bacteria</taxon>
        <taxon>Pseudomonadati</taxon>
        <taxon>Pseudomonadota</taxon>
        <taxon>Gammaproteobacteria</taxon>
        <taxon>Vibrionales</taxon>
        <taxon>Vibrionaceae</taxon>
        <taxon>Vibrio</taxon>
    </lineage>
</organism>
<comment type="function">
    <text evidence="1">Required for accurate and efficient protein synthesis under certain stress conditions. May act as a fidelity factor of the translation reaction, by catalyzing a one-codon backward translocation of tRNAs on improperly translocated ribosomes. Back-translocation proceeds from a post-translocation (POST) complex to a pre-translocation (PRE) complex, thus giving elongation factor G a second chance to translocate the tRNAs correctly. Binds to ribosomes in a GTP-dependent manner.</text>
</comment>
<comment type="catalytic activity">
    <reaction evidence="1">
        <text>GTP + H2O = GDP + phosphate + H(+)</text>
        <dbReference type="Rhea" id="RHEA:19669"/>
        <dbReference type="ChEBI" id="CHEBI:15377"/>
        <dbReference type="ChEBI" id="CHEBI:15378"/>
        <dbReference type="ChEBI" id="CHEBI:37565"/>
        <dbReference type="ChEBI" id="CHEBI:43474"/>
        <dbReference type="ChEBI" id="CHEBI:58189"/>
        <dbReference type="EC" id="3.6.5.n1"/>
    </reaction>
</comment>
<comment type="subcellular location">
    <subcellularLocation>
        <location evidence="1">Cell inner membrane</location>
        <topology evidence="1">Peripheral membrane protein</topology>
        <orientation evidence="1">Cytoplasmic side</orientation>
    </subcellularLocation>
</comment>
<comment type="similarity">
    <text evidence="1">Belongs to the TRAFAC class translation factor GTPase superfamily. Classic translation factor GTPase family. LepA subfamily.</text>
</comment>
<proteinExistence type="inferred from homology"/>
<dbReference type="EC" id="3.6.5.n1" evidence="1"/>
<dbReference type="EMBL" id="CP000789">
    <property type="protein sequence ID" value="ABU72474.1"/>
    <property type="molecule type" value="Genomic_DNA"/>
</dbReference>
<dbReference type="RefSeq" id="WP_005531645.1">
    <property type="nucleotide sequence ID" value="NC_009783.1"/>
</dbReference>
<dbReference type="SMR" id="A7MZB0"/>
<dbReference type="KEGG" id="vha:VIBHAR_03538"/>
<dbReference type="PATRIC" id="fig|338187.25.peg.2672"/>
<dbReference type="Proteomes" id="UP000008152">
    <property type="component" value="Chromosome I"/>
</dbReference>
<dbReference type="GO" id="GO:0005886">
    <property type="term" value="C:plasma membrane"/>
    <property type="evidence" value="ECO:0007669"/>
    <property type="project" value="UniProtKB-SubCell"/>
</dbReference>
<dbReference type="GO" id="GO:0005525">
    <property type="term" value="F:GTP binding"/>
    <property type="evidence" value="ECO:0007669"/>
    <property type="project" value="UniProtKB-UniRule"/>
</dbReference>
<dbReference type="GO" id="GO:0003924">
    <property type="term" value="F:GTPase activity"/>
    <property type="evidence" value="ECO:0007669"/>
    <property type="project" value="UniProtKB-UniRule"/>
</dbReference>
<dbReference type="GO" id="GO:0097216">
    <property type="term" value="F:guanosine tetraphosphate binding"/>
    <property type="evidence" value="ECO:0007669"/>
    <property type="project" value="UniProtKB-ARBA"/>
</dbReference>
<dbReference type="GO" id="GO:0043022">
    <property type="term" value="F:ribosome binding"/>
    <property type="evidence" value="ECO:0007669"/>
    <property type="project" value="UniProtKB-UniRule"/>
</dbReference>
<dbReference type="GO" id="GO:0003746">
    <property type="term" value="F:translation elongation factor activity"/>
    <property type="evidence" value="ECO:0007669"/>
    <property type="project" value="UniProtKB-UniRule"/>
</dbReference>
<dbReference type="GO" id="GO:0045727">
    <property type="term" value="P:positive regulation of translation"/>
    <property type="evidence" value="ECO:0007669"/>
    <property type="project" value="UniProtKB-UniRule"/>
</dbReference>
<dbReference type="CDD" id="cd03699">
    <property type="entry name" value="EF4_II"/>
    <property type="match status" value="1"/>
</dbReference>
<dbReference type="CDD" id="cd16260">
    <property type="entry name" value="EF4_III"/>
    <property type="match status" value="1"/>
</dbReference>
<dbReference type="CDD" id="cd01890">
    <property type="entry name" value="LepA"/>
    <property type="match status" value="1"/>
</dbReference>
<dbReference type="CDD" id="cd03709">
    <property type="entry name" value="lepA_C"/>
    <property type="match status" value="1"/>
</dbReference>
<dbReference type="FunFam" id="3.40.50.300:FF:000078">
    <property type="entry name" value="Elongation factor 4"/>
    <property type="match status" value="1"/>
</dbReference>
<dbReference type="FunFam" id="2.40.30.10:FF:000015">
    <property type="entry name" value="Translation factor GUF1, mitochondrial"/>
    <property type="match status" value="1"/>
</dbReference>
<dbReference type="FunFam" id="3.30.70.240:FF:000007">
    <property type="entry name" value="Translation factor GUF1, mitochondrial"/>
    <property type="match status" value="1"/>
</dbReference>
<dbReference type="FunFam" id="3.30.70.2570:FF:000001">
    <property type="entry name" value="Translation factor GUF1, mitochondrial"/>
    <property type="match status" value="1"/>
</dbReference>
<dbReference type="FunFam" id="3.30.70.870:FF:000004">
    <property type="entry name" value="Translation factor GUF1, mitochondrial"/>
    <property type="match status" value="1"/>
</dbReference>
<dbReference type="Gene3D" id="3.30.70.240">
    <property type="match status" value="1"/>
</dbReference>
<dbReference type="Gene3D" id="3.30.70.2570">
    <property type="entry name" value="Elongation factor 4, C-terminal domain"/>
    <property type="match status" value="1"/>
</dbReference>
<dbReference type="Gene3D" id="3.30.70.870">
    <property type="entry name" value="Elongation Factor G (Translational Gtpase), domain 3"/>
    <property type="match status" value="1"/>
</dbReference>
<dbReference type="Gene3D" id="3.40.50.300">
    <property type="entry name" value="P-loop containing nucleotide triphosphate hydrolases"/>
    <property type="match status" value="1"/>
</dbReference>
<dbReference type="Gene3D" id="2.40.30.10">
    <property type="entry name" value="Translation factors"/>
    <property type="match status" value="1"/>
</dbReference>
<dbReference type="HAMAP" id="MF_00071">
    <property type="entry name" value="LepA"/>
    <property type="match status" value="1"/>
</dbReference>
<dbReference type="InterPro" id="IPR006297">
    <property type="entry name" value="EF-4"/>
</dbReference>
<dbReference type="InterPro" id="IPR035647">
    <property type="entry name" value="EFG_III/V"/>
</dbReference>
<dbReference type="InterPro" id="IPR000640">
    <property type="entry name" value="EFG_V-like"/>
</dbReference>
<dbReference type="InterPro" id="IPR004161">
    <property type="entry name" value="EFTu-like_2"/>
</dbReference>
<dbReference type="InterPro" id="IPR031157">
    <property type="entry name" value="G_TR_CS"/>
</dbReference>
<dbReference type="InterPro" id="IPR038363">
    <property type="entry name" value="LepA_C_sf"/>
</dbReference>
<dbReference type="InterPro" id="IPR013842">
    <property type="entry name" value="LepA_CTD"/>
</dbReference>
<dbReference type="InterPro" id="IPR035654">
    <property type="entry name" value="LepA_IV"/>
</dbReference>
<dbReference type="InterPro" id="IPR027417">
    <property type="entry name" value="P-loop_NTPase"/>
</dbReference>
<dbReference type="InterPro" id="IPR005225">
    <property type="entry name" value="Small_GTP-bd"/>
</dbReference>
<dbReference type="InterPro" id="IPR000795">
    <property type="entry name" value="T_Tr_GTP-bd_dom"/>
</dbReference>
<dbReference type="InterPro" id="IPR009000">
    <property type="entry name" value="Transl_B-barrel_sf"/>
</dbReference>
<dbReference type="NCBIfam" id="TIGR01393">
    <property type="entry name" value="lepA"/>
    <property type="match status" value="1"/>
</dbReference>
<dbReference type="NCBIfam" id="TIGR00231">
    <property type="entry name" value="small_GTP"/>
    <property type="match status" value="1"/>
</dbReference>
<dbReference type="PANTHER" id="PTHR43512:SF4">
    <property type="entry name" value="TRANSLATION FACTOR GUF1 HOMOLOG, CHLOROPLASTIC"/>
    <property type="match status" value="1"/>
</dbReference>
<dbReference type="PANTHER" id="PTHR43512">
    <property type="entry name" value="TRANSLATION FACTOR GUF1-RELATED"/>
    <property type="match status" value="1"/>
</dbReference>
<dbReference type="Pfam" id="PF00679">
    <property type="entry name" value="EFG_C"/>
    <property type="match status" value="1"/>
</dbReference>
<dbReference type="Pfam" id="PF00009">
    <property type="entry name" value="GTP_EFTU"/>
    <property type="match status" value="1"/>
</dbReference>
<dbReference type="Pfam" id="PF03144">
    <property type="entry name" value="GTP_EFTU_D2"/>
    <property type="match status" value="1"/>
</dbReference>
<dbReference type="Pfam" id="PF06421">
    <property type="entry name" value="LepA_C"/>
    <property type="match status" value="1"/>
</dbReference>
<dbReference type="PRINTS" id="PR00315">
    <property type="entry name" value="ELONGATNFCT"/>
</dbReference>
<dbReference type="SMART" id="SM00838">
    <property type="entry name" value="EFG_C"/>
    <property type="match status" value="1"/>
</dbReference>
<dbReference type="SUPFAM" id="SSF54980">
    <property type="entry name" value="EF-G C-terminal domain-like"/>
    <property type="match status" value="2"/>
</dbReference>
<dbReference type="SUPFAM" id="SSF52540">
    <property type="entry name" value="P-loop containing nucleoside triphosphate hydrolases"/>
    <property type="match status" value="1"/>
</dbReference>
<dbReference type="SUPFAM" id="SSF50447">
    <property type="entry name" value="Translation proteins"/>
    <property type="match status" value="1"/>
</dbReference>
<dbReference type="PROSITE" id="PS00301">
    <property type="entry name" value="G_TR_1"/>
    <property type="match status" value="1"/>
</dbReference>
<dbReference type="PROSITE" id="PS51722">
    <property type="entry name" value="G_TR_2"/>
    <property type="match status" value="1"/>
</dbReference>
<reference key="1">
    <citation type="submission" date="2007-08" db="EMBL/GenBank/DDBJ databases">
        <authorList>
            <consortium name="The Vibrio harveyi Genome Sequencing Project"/>
            <person name="Bassler B."/>
            <person name="Clifton S.W."/>
            <person name="Fulton L."/>
            <person name="Delehaunty K."/>
            <person name="Fronick C."/>
            <person name="Harrison M."/>
            <person name="Markivic C."/>
            <person name="Fulton R."/>
            <person name="Tin-Wollam A.-M."/>
            <person name="Shah N."/>
            <person name="Pepin K."/>
            <person name="Nash W."/>
            <person name="Thiruvilangam P."/>
            <person name="Bhonagiri V."/>
            <person name="Waters C."/>
            <person name="Tu K.C."/>
            <person name="Irgon J."/>
            <person name="Wilson R.K."/>
        </authorList>
    </citation>
    <scope>NUCLEOTIDE SEQUENCE [LARGE SCALE GENOMIC DNA]</scope>
    <source>
        <strain>ATCC BAA-1116 / BB120</strain>
    </source>
</reference>
<evidence type="ECO:0000255" key="1">
    <source>
        <dbReference type="HAMAP-Rule" id="MF_00071"/>
    </source>
</evidence>
<accession>A7MZB0</accession>
<sequence>MKHIRNFSIIAHIDHGKSTLSDRLIQVCGGLSDREMAAQVLDSMDLERERGITIKSQSVTLNYTAKDGETYQLNFIDTPGHVDFAYEVSRSLAACEGALLVVDAGQGVEAQTLANCYTAIEMDLEVVPILNKIDLPAADPERVAEEIEEIVGIDAMEATRCSAKTGIGVDDVLENIVSAIPAPEGDPDAPLQALIIDSWFDNYLGVVSLVRIKNGSLKKNDKIKVMSTGQTWGVDRLGIFTPKQVDTDVLRTGEVGWVVCGIKDILGAPVGDTLTLAKNGSEKPLPGFKKVKPQVYAGLFPVSSDDYENFRDALGKLSLNDASLFYEPENSAALGFGFRCGFLGMLHMEIIQERLEREYDLDLITTAPTVVYEVEQTNGETMYVDSPAKLPAVNDIEEIREPISRCNILVPADYLGNVITLCVEKRGVQVDMVYHGNQVAITYDIPMAEVVLDFFDRLKSTSRGYASLDYNFQRFEASNMVRVDVLLNGDKVDALALITHKDQSQTRGRQLVEKMKEFIPRQMFDIAIQAAIGNHIIARSTVKQLRKNVIAKCYGGDVSRKKKLLKKQKEGKKRMKQIGNVELPQEAFLAILHVGKD</sequence>
<protein>
    <recommendedName>
        <fullName evidence="1">Elongation factor 4</fullName>
        <shortName evidence="1">EF-4</shortName>
        <ecNumber evidence="1">3.6.5.n1</ecNumber>
    </recommendedName>
    <alternativeName>
        <fullName evidence="1">Ribosomal back-translocase LepA</fullName>
    </alternativeName>
</protein>